<protein>
    <recommendedName>
        <fullName evidence="1">Ribonuclease Z</fullName>
        <shortName evidence="1">RNase Z</shortName>
        <ecNumber evidence="1">3.1.26.11</ecNumber>
    </recommendedName>
    <alternativeName>
        <fullName evidence="1">tRNA 3 endonuclease</fullName>
    </alternativeName>
    <alternativeName>
        <fullName evidence="1">tRNase Z</fullName>
    </alternativeName>
</protein>
<accession>A8Z2D7</accession>
<keyword id="KW-0255">Endonuclease</keyword>
<keyword id="KW-0378">Hydrolase</keyword>
<keyword id="KW-0479">Metal-binding</keyword>
<keyword id="KW-0540">Nuclease</keyword>
<keyword id="KW-0819">tRNA processing</keyword>
<keyword id="KW-0862">Zinc</keyword>
<reference key="1">
    <citation type="journal article" date="2007" name="BMC Microbiol.">
        <title>Subtle genetic changes enhance virulence of methicillin resistant and sensitive Staphylococcus aureus.</title>
        <authorList>
            <person name="Highlander S.K."/>
            <person name="Hulten K.G."/>
            <person name="Qin X."/>
            <person name="Jiang H."/>
            <person name="Yerrapragada S."/>
            <person name="Mason E.O. Jr."/>
            <person name="Shang Y."/>
            <person name="Williams T.M."/>
            <person name="Fortunov R.M."/>
            <person name="Liu Y."/>
            <person name="Igboeli O."/>
            <person name="Petrosino J."/>
            <person name="Tirumalai M."/>
            <person name="Uzman A."/>
            <person name="Fox G.E."/>
            <person name="Cardenas A.M."/>
            <person name="Muzny D.M."/>
            <person name="Hemphill L."/>
            <person name="Ding Y."/>
            <person name="Dugan S."/>
            <person name="Blyth P.R."/>
            <person name="Buhay C.J."/>
            <person name="Dinh H.H."/>
            <person name="Hawes A.C."/>
            <person name="Holder M."/>
            <person name="Kovar C.L."/>
            <person name="Lee S.L."/>
            <person name="Liu W."/>
            <person name="Nazareth L.V."/>
            <person name="Wang Q."/>
            <person name="Zhou J."/>
            <person name="Kaplan S.L."/>
            <person name="Weinstock G.M."/>
        </authorList>
    </citation>
    <scope>NUCLEOTIDE SEQUENCE [LARGE SCALE GENOMIC DNA]</scope>
    <source>
        <strain>USA300 / TCH1516</strain>
    </source>
</reference>
<gene>
    <name evidence="1" type="primary">rnz</name>
    <name type="ordered locus">USA300HOU_1505</name>
</gene>
<name>RNZ_STAAT</name>
<proteinExistence type="inferred from homology"/>
<comment type="function">
    <text evidence="1">Zinc phosphodiesterase, which displays some tRNA 3'-processing endonuclease activity. Probably involved in tRNA maturation, by removing a 3'-trailer from precursor tRNA.</text>
</comment>
<comment type="catalytic activity">
    <reaction evidence="1">
        <text>Endonucleolytic cleavage of RNA, removing extra 3' nucleotides from tRNA precursor, generating 3' termini of tRNAs. A 3'-hydroxy group is left at the tRNA terminus and a 5'-phosphoryl group is left at the trailer molecule.</text>
        <dbReference type="EC" id="3.1.26.11"/>
    </reaction>
</comment>
<comment type="cofactor">
    <cofactor evidence="1">
        <name>Zn(2+)</name>
        <dbReference type="ChEBI" id="CHEBI:29105"/>
    </cofactor>
    <text evidence="1">Binds 2 Zn(2+) ions.</text>
</comment>
<comment type="subunit">
    <text evidence="1">Homodimer.</text>
</comment>
<comment type="similarity">
    <text evidence="1">Belongs to the RNase Z family.</text>
</comment>
<feature type="chain" id="PRO_1000088344" description="Ribonuclease Z">
    <location>
        <begin position="1"/>
        <end position="306"/>
    </location>
</feature>
<feature type="active site" description="Proton acceptor" evidence="1">
    <location>
        <position position="67"/>
    </location>
</feature>
<feature type="binding site" evidence="1">
    <location>
        <position position="63"/>
    </location>
    <ligand>
        <name>Zn(2+)</name>
        <dbReference type="ChEBI" id="CHEBI:29105"/>
        <label>1</label>
        <note>catalytic</note>
    </ligand>
</feature>
<feature type="binding site" evidence="1">
    <location>
        <position position="65"/>
    </location>
    <ligand>
        <name>Zn(2+)</name>
        <dbReference type="ChEBI" id="CHEBI:29105"/>
        <label>1</label>
        <note>catalytic</note>
    </ligand>
</feature>
<feature type="binding site" evidence="1">
    <location>
        <position position="67"/>
    </location>
    <ligand>
        <name>Zn(2+)</name>
        <dbReference type="ChEBI" id="CHEBI:29105"/>
        <label>2</label>
        <note>catalytic</note>
    </ligand>
</feature>
<feature type="binding site" evidence="1">
    <location>
        <position position="68"/>
    </location>
    <ligand>
        <name>Zn(2+)</name>
        <dbReference type="ChEBI" id="CHEBI:29105"/>
        <label>2</label>
        <note>catalytic</note>
    </ligand>
</feature>
<feature type="binding site" evidence="1">
    <location>
        <position position="141"/>
    </location>
    <ligand>
        <name>Zn(2+)</name>
        <dbReference type="ChEBI" id="CHEBI:29105"/>
        <label>1</label>
        <note>catalytic</note>
    </ligand>
</feature>
<feature type="binding site" evidence="1">
    <location>
        <position position="211"/>
    </location>
    <ligand>
        <name>Zn(2+)</name>
        <dbReference type="ChEBI" id="CHEBI:29105"/>
        <label>1</label>
        <note>catalytic</note>
    </ligand>
</feature>
<feature type="binding site" evidence="1">
    <location>
        <position position="211"/>
    </location>
    <ligand>
        <name>Zn(2+)</name>
        <dbReference type="ChEBI" id="CHEBI:29105"/>
        <label>2</label>
        <note>catalytic</note>
    </ligand>
</feature>
<feature type="binding site" evidence="1">
    <location>
        <position position="269"/>
    </location>
    <ligand>
        <name>Zn(2+)</name>
        <dbReference type="ChEBI" id="CHEBI:29105"/>
        <label>2</label>
        <note>catalytic</note>
    </ligand>
</feature>
<sequence>MEVTFFGTSAGLPTKERNTQAIALNLEPYSNSIWLFDVGEGTQHQILHHAIKLGKVTHIFITHMHGDHIFGLPGLLSSRSFQGGEQKPLTLVGPKGIKAYVEMSMNLSESHLNYPITYIEIDDHLTYHHDGFTVEAHLLNHGIPSYGYRVMAPETTGTINVEALKNIGLEPGPKYQEVKSHDTFEHNGQVYQSKDFRGESKQGPVVAIFGDTKPCSNERVISRDADVMVHEATYIDGEKHLANNYHHSHIEDVFALIKEANVKRTLITHLSNRYNTEDINEIYQTLIQNEDTPNFNFVKDFDSFKI</sequence>
<organism>
    <name type="scientific">Staphylococcus aureus (strain USA300 / TCH1516)</name>
    <dbReference type="NCBI Taxonomy" id="451516"/>
    <lineage>
        <taxon>Bacteria</taxon>
        <taxon>Bacillati</taxon>
        <taxon>Bacillota</taxon>
        <taxon>Bacilli</taxon>
        <taxon>Bacillales</taxon>
        <taxon>Staphylococcaceae</taxon>
        <taxon>Staphylococcus</taxon>
    </lineage>
</organism>
<evidence type="ECO:0000255" key="1">
    <source>
        <dbReference type="HAMAP-Rule" id="MF_01818"/>
    </source>
</evidence>
<dbReference type="EC" id="3.1.26.11" evidence="1"/>
<dbReference type="EMBL" id="CP000730">
    <property type="protein sequence ID" value="ABX29512.1"/>
    <property type="molecule type" value="Genomic_DNA"/>
</dbReference>
<dbReference type="RefSeq" id="WP_000454064.1">
    <property type="nucleotide sequence ID" value="NC_010079.1"/>
</dbReference>
<dbReference type="SMR" id="A8Z2D7"/>
<dbReference type="KEGG" id="sax:USA300HOU_1505"/>
<dbReference type="HOGENOM" id="CLU_031317_2_0_9"/>
<dbReference type="GO" id="GO:0042781">
    <property type="term" value="F:3'-tRNA processing endoribonuclease activity"/>
    <property type="evidence" value="ECO:0007669"/>
    <property type="project" value="UniProtKB-UniRule"/>
</dbReference>
<dbReference type="GO" id="GO:0008270">
    <property type="term" value="F:zinc ion binding"/>
    <property type="evidence" value="ECO:0007669"/>
    <property type="project" value="UniProtKB-UniRule"/>
</dbReference>
<dbReference type="CDD" id="cd07717">
    <property type="entry name" value="RNaseZ_ZiPD-like_MBL-fold"/>
    <property type="match status" value="1"/>
</dbReference>
<dbReference type="FunFam" id="3.60.15.10:FF:000002">
    <property type="entry name" value="Ribonuclease Z"/>
    <property type="match status" value="1"/>
</dbReference>
<dbReference type="Gene3D" id="3.60.15.10">
    <property type="entry name" value="Ribonuclease Z/Hydroxyacylglutathione hydrolase-like"/>
    <property type="match status" value="1"/>
</dbReference>
<dbReference type="HAMAP" id="MF_01818">
    <property type="entry name" value="RNase_Z_BN"/>
    <property type="match status" value="1"/>
</dbReference>
<dbReference type="InterPro" id="IPR036866">
    <property type="entry name" value="RibonucZ/Hydroxyglut_hydro"/>
</dbReference>
<dbReference type="InterPro" id="IPR013471">
    <property type="entry name" value="RNase_Z/BN"/>
</dbReference>
<dbReference type="InterPro" id="IPR027794">
    <property type="entry name" value="tRNase_Z_dom"/>
</dbReference>
<dbReference type="NCBIfam" id="NF000801">
    <property type="entry name" value="PRK00055.1-3"/>
    <property type="match status" value="1"/>
</dbReference>
<dbReference type="NCBIfam" id="TIGR02651">
    <property type="entry name" value="RNase_Z"/>
    <property type="match status" value="1"/>
</dbReference>
<dbReference type="PANTHER" id="PTHR46018">
    <property type="entry name" value="ZINC PHOSPHODIESTERASE ELAC PROTEIN 1"/>
    <property type="match status" value="1"/>
</dbReference>
<dbReference type="PANTHER" id="PTHR46018:SF2">
    <property type="entry name" value="ZINC PHOSPHODIESTERASE ELAC PROTEIN 1"/>
    <property type="match status" value="1"/>
</dbReference>
<dbReference type="Pfam" id="PF13691">
    <property type="entry name" value="Lactamase_B_4"/>
    <property type="match status" value="1"/>
</dbReference>
<dbReference type="SUPFAM" id="SSF56281">
    <property type="entry name" value="Metallo-hydrolase/oxidoreductase"/>
    <property type="match status" value="1"/>
</dbReference>